<reference key="1">
    <citation type="journal article" date="1986" name="J. Mol. Biol.">
        <title>Sequence of the short unique region, short repeats, and part of the long repeats of human cytomegalovirus.</title>
        <authorList>
            <person name="Weston K.M."/>
            <person name="Barrell B.G."/>
        </authorList>
    </citation>
    <scope>NUCLEOTIDE SEQUENCE [GENOMIC DNA]</scope>
</reference>
<reference key="2">
    <citation type="journal article" date="1990" name="Curr. Top. Microbiol. Immunol.">
        <title>Analysis of the protein-coding content of the sequence of human cytomegalovirus strain AD169.</title>
        <authorList>
            <person name="Chee M.S."/>
            <person name="Bankier A.T."/>
            <person name="Beck S."/>
            <person name="Bohni R."/>
            <person name="Brown C.M."/>
            <person name="Cerny R."/>
            <person name="Horsnell T."/>
            <person name="Hutchison C.A. III"/>
            <person name="Kouzarides T."/>
            <person name="Martignetti J.A."/>
            <person name="Preddie E."/>
            <person name="Satchwell S.C."/>
            <person name="Tomlinson P."/>
            <person name="Weston K.M."/>
            <person name="Barrell B.G."/>
        </authorList>
    </citation>
    <scope>NUCLEOTIDE SEQUENCE [LARGE SCALE GENOMIC DNA]</scope>
</reference>
<reference key="3">
    <citation type="journal article" date="2003" name="J. Gen. Virol.">
        <title>The human cytomegalovirus genome revisited: comparison with the chimpanzee cytomegalovirus genome.</title>
        <authorList>
            <person name="Davison A.J."/>
            <person name="Dolan A."/>
            <person name="Akter P."/>
            <person name="Addison C."/>
            <person name="Dargan D.J."/>
            <person name="Alcendor D.J."/>
            <person name="McGeoch D.J."/>
            <person name="Hayward G.S."/>
        </authorList>
    </citation>
    <scope>GENOME REANNOTATION</scope>
</reference>
<reference key="4">
    <citation type="journal article" date="2003" name="J. Gen. Virol.">
        <authorList>
            <person name="Davison A.J."/>
            <person name="Dolan A."/>
            <person name="Akter P."/>
            <person name="Addison C."/>
            <person name="Dargan D.J."/>
            <person name="Alcendor D.J."/>
            <person name="McGeoch D.J."/>
            <person name="Hayward G.S."/>
        </authorList>
    </citation>
    <scope>ERRATUM OF PUBMED:12533697</scope>
</reference>
<reference key="5">
    <citation type="journal article" date="1997" name="J. Virol.">
        <title>Characterization of the human cytomegalovirus irs1 and trs1 genes: a second immediate-early transcription unit within irs1 whose product antagonizes transcriptional activation.</title>
        <authorList>
            <person name="Romanowski M.J."/>
            <person name="Shenk T."/>
        </authorList>
    </citation>
    <scope>SUBCELLULAR LOCATION</scope>
</reference>
<reference key="6">
    <citation type="journal article" date="2004" name="J. Virol.">
        <title>Identification of proteins in human cytomegalovirus (HCMV) particles: the HCMV proteome.</title>
        <authorList>
            <person name="Varnum S.M."/>
            <person name="Streblow D.N."/>
            <person name="Monroe M.E."/>
            <person name="Smith P."/>
            <person name="Auberry K.J."/>
            <person name="Pasa-Tolic L."/>
            <person name="Wang D."/>
            <person name="Camp D.G. II"/>
            <person name="Rodland K."/>
            <person name="Wiley S."/>
            <person name="Britt W."/>
            <person name="Shenk T."/>
            <person name="Smith R.D."/>
            <person name="Nelson J.A."/>
        </authorList>
    </citation>
    <scope>IDENTIFICATION</scope>
</reference>
<reference key="7">
    <citation type="journal article" date="2004" name="J. Virol.">
        <authorList>
            <person name="Varnum S.M."/>
            <person name="Streblow D.N."/>
            <person name="Monroe M.E."/>
            <person name="Smith P."/>
            <person name="Auberry K.J."/>
            <person name="Pasa-Tolic L."/>
            <person name="Wang D."/>
            <person name="Camp D.G. II"/>
            <person name="Rodland K."/>
            <person name="Wiley S."/>
            <person name="Britt W."/>
            <person name="Shenk T."/>
            <person name="Smith R.D."/>
            <person name="Nelson J.A."/>
        </authorList>
    </citation>
    <scope>ERRATUM OF PUBMED:15452216</scope>
</reference>
<reference key="8">
    <citation type="journal article" date="2005" name="J. Virol.">
        <title>Double-stranded RNA binding by human cytomegalovirus pTRS1.</title>
        <authorList>
            <person name="Hakki M."/>
            <person name="Geballe A.P."/>
        </authorList>
    </citation>
    <scope>RNA-BINDING</scope>
    <scope>DOMAIN</scope>
    <source>
        <strain>Toledo</strain>
    </source>
</reference>
<reference key="9">
    <citation type="journal article" date="2006" name="J. Virol.">
        <title>Binding and nuclear relocalization of protein kinase R by human cytomegalovirus TRS1.</title>
        <authorList>
            <person name="Hakki M."/>
            <person name="Marshall E.E."/>
            <person name="De Niro K.L."/>
            <person name="Geballe A.P."/>
        </authorList>
    </citation>
    <scope>FUNCTION</scope>
    <scope>INTERACTION WITH HOST EIF2AK2</scope>
    <scope>DOMAIN</scope>
    <source>
        <strain>rTowne-1</strain>
    </source>
</reference>
<reference key="10">
    <citation type="journal article" date="2009" name="J. Virol.">
        <title>The endoplasmic reticulum chaperone BiP/GRP78 is important in the structure and function of the human cytomegalovirus assembly compartment.</title>
        <authorList>
            <person name="Buchkovich N.J."/>
            <person name="Maguire T.G."/>
            <person name="Paton A.W."/>
            <person name="Paton J.C."/>
            <person name="Alwine J.C."/>
        </authorList>
    </citation>
    <scope>INTERACTION WITH HOST HSPA5</scope>
    <source>
        <strain>Towne</strain>
    </source>
</reference>
<reference key="11">
    <citation type="journal article" date="2010" name="J. Gen. Virol.">
        <title>Association of human cytomegalovirus proteins IRS1 and TRS1 with the viral DNA polymerase accessory subunit UL44.</title>
        <authorList>
            <person name="Strang B.L."/>
            <person name="Geballe A.P."/>
            <person name="Coen D.M."/>
        </authorList>
    </citation>
    <scope>INTERACTION WITH UL44</scope>
</reference>
<reference key="12">
    <citation type="journal article" date="2012" name="J. Virol.">
        <title>The human cytomegalovirus protein TRS1 inhibits autophagy via its interaction with Beclin 1.</title>
        <authorList>
            <person name="Chaumorcel M."/>
            <person name="Lussignol M."/>
            <person name="Mouna L."/>
            <person name="Cavignac Y."/>
            <person name="Fahie K."/>
            <person name="Cotte-Laffitte J."/>
            <person name="Geballe A."/>
            <person name="Brune W."/>
            <person name="Beau I."/>
            <person name="Codogno P."/>
            <person name="Esclatine A."/>
        </authorList>
    </citation>
    <scope>FUNCTION</scope>
    <scope>INTERACTION WITH HOST BECN1</scope>
</reference>
<reference key="13">
    <citation type="journal article" date="2013" name="Virology">
        <title>Double-stranded RNA binding by the human cytomegalovirus PKR antagonist TRS1.</title>
        <authorList>
            <person name="Bierle C.J."/>
            <person name="Semmens K.M."/>
            <person name="Geballe A.P."/>
        </authorList>
    </citation>
    <scope>RNA-BINDING</scope>
    <scope>MUTAGENESIS OF ARG-122; ARG-125; LYS-126; ARG-130; ARG-151; ARG-163; ARG-231; GLY-242 AND ARG-246</scope>
</reference>
<reference key="14">
    <citation type="journal article" date="2016" name="J. Virol.">
        <title>Human Cytomegalovirus pTRS1 and pIRS1 Antagonize Protein Kinase R To Facilitate Virus Replication.</title>
        <authorList>
            <person name="Ziehr B."/>
            <person name="Vincent H.A."/>
            <person name="Moorman N.J."/>
        </authorList>
    </citation>
    <scope>FUNCTION</scope>
    <scope>DOMAIN</scope>
</reference>
<name>TRS1_HCMVA</name>
<accession>P09695</accession>
<accession>Q7M6U0</accession>
<comment type="function">
    <text evidence="3 6 8">Inhibits the establishment of the antiviral state and the integrated stress response (ISR) in the infected cell. Prevents the phosphorylation of the host eukaryotic translation initiation factor eIF-2alpha/EIF2S1 and thus the shutoff of viral and cellular protein synthesis by directly interacting with EIF2AK2/PKR (PubMed:16987971, PubMed:26819306). Prevents stress granule formation in response to eIF-2alpha/EIF2S1 phosphorylation, thereby rescuing viral replication and protein synthesis (PubMed:26819306). Also inhibits host autophagy by interacting with host Beclin-1/BECN1 (PubMed:22205736).</text>
</comment>
<comment type="subunit">
    <text evidence="3 4 5 6">Interacts with host EIF2AK2/PKR; this interaction retains EIF2AK2 to the host nucleus and prevents its activation (PubMed:16987971). Interaction (via N-terminus) with host BECN1; this interaction inhibits host autophagy (PubMed:20444996, PubMed:22205736). Interacts with the viral DNA polymerase accessory subunit UL44 (PubMed:20444996). Interacts with host HSPA5 (PubMed:19741001).</text>
</comment>
<comment type="subcellular location">
    <subcellularLocation>
        <location evidence="9">Virion</location>
    </subcellularLocation>
    <subcellularLocation>
        <location evidence="9">Host cytoplasm</location>
    </subcellularLocation>
    <subcellularLocation>
        <location evidence="9">Host nucleus</location>
    </subcellularLocation>
</comment>
<comment type="domain">
    <text evidence="2 3 8">The N-terminus binds RNA (PubMed:15919885). The C-terminus is required to bind and antagonize host EIF2AK2/PKR (PubMed:16987971, PubMed:26819306).</text>
</comment>
<comment type="similarity">
    <text evidence="10">Belongs to the herpesviridae US22 family.</text>
</comment>
<organismHost>
    <name type="scientific">Homo sapiens</name>
    <name type="common">Human</name>
    <dbReference type="NCBI Taxonomy" id="9606"/>
</organismHost>
<evidence type="ECO:0000256" key="1">
    <source>
        <dbReference type="SAM" id="MobiDB-lite"/>
    </source>
</evidence>
<evidence type="ECO:0000269" key="2">
    <source>
    </source>
</evidence>
<evidence type="ECO:0000269" key="3">
    <source>
    </source>
</evidence>
<evidence type="ECO:0000269" key="4">
    <source>
    </source>
</evidence>
<evidence type="ECO:0000269" key="5">
    <source>
    </source>
</evidence>
<evidence type="ECO:0000269" key="6">
    <source>
    </source>
</evidence>
<evidence type="ECO:0000269" key="7">
    <source>
    </source>
</evidence>
<evidence type="ECO:0000269" key="8">
    <source>
    </source>
</evidence>
<evidence type="ECO:0000269" key="9">
    <source>
    </source>
</evidence>
<evidence type="ECO:0000305" key="10"/>
<feature type="chain" id="PRO_0000115266" description="Protein HHLF1">
    <location>
        <begin position="1"/>
        <end position="788"/>
    </location>
</feature>
<feature type="region of interest" description="Disordered" evidence="1">
    <location>
        <begin position="1"/>
        <end position="82"/>
    </location>
</feature>
<feature type="region of interest" description="RNA-binding" evidence="2">
    <location>
        <begin position="74"/>
        <end position="248"/>
    </location>
</feature>
<feature type="region of interest" description="Disordered" evidence="1">
    <location>
        <begin position="366"/>
        <end position="385"/>
    </location>
</feature>
<feature type="region of interest" description="Disordered" evidence="1">
    <location>
        <begin position="609"/>
        <end position="663"/>
    </location>
</feature>
<feature type="region of interest" description="Interaction with host EIF2AK2/PKR" evidence="8">
    <location>
        <begin position="671"/>
        <end position="788"/>
    </location>
</feature>
<feature type="compositionally biased region" description="Gly residues" evidence="1">
    <location>
        <begin position="16"/>
        <end position="25"/>
    </location>
</feature>
<feature type="compositionally biased region" description="Low complexity" evidence="1">
    <location>
        <begin position="26"/>
        <end position="56"/>
    </location>
</feature>
<feature type="compositionally biased region" description="Basic and acidic residues" evidence="1">
    <location>
        <begin position="650"/>
        <end position="659"/>
    </location>
</feature>
<feature type="mutagenesis site" description="25% loss of viral replication." evidence="7">
    <original>R</original>
    <variation>A</variation>
    <location>
        <position position="122"/>
    </location>
</feature>
<feature type="mutagenesis site" description="35% loss of viral replication." evidence="7">
    <original>R</original>
    <variation>A</variation>
    <location>
        <position position="125"/>
    </location>
</feature>
<feature type="mutagenesis site" description="25% loss of viral replication." evidence="7">
    <original>K</original>
    <variation>A</variation>
    <location>
        <position position="126"/>
    </location>
</feature>
<feature type="mutagenesis site" description="25% loss of viral replication." evidence="7">
    <original>R</original>
    <variation>A</variation>
    <location>
        <position position="130"/>
    </location>
</feature>
<feature type="mutagenesis site" description="75% loss of viral replication. Complete loss of dsRNA binding." evidence="7">
    <original>R</original>
    <variation>A</variation>
    <location>
        <position position="151"/>
    </location>
</feature>
<feature type="mutagenesis site" description="15% loss of viral replication." evidence="7">
    <original>R</original>
    <variation>A</variation>
    <location>
        <position position="163"/>
    </location>
</feature>
<feature type="mutagenesis site" description="10% loss of viral replication." evidence="7">
    <original>R</original>
    <variation>A</variation>
    <location>
        <position position="231"/>
    </location>
</feature>
<feature type="mutagenesis site" description="90% loss of viral replication. Complete loss of dsRNA binding." evidence="7">
    <original>G</original>
    <variation>A</variation>
    <location>
        <position position="242"/>
    </location>
</feature>
<feature type="mutagenesis site" description="25% loss of viral replication." evidence="7">
    <original>R</original>
    <variation>A</variation>
    <location>
        <position position="246"/>
    </location>
</feature>
<proteinExistence type="evidence at protein level"/>
<keyword id="KW-1035">Host cytoplasm</keyword>
<keyword id="KW-1048">Host nucleus</keyword>
<keyword id="KW-0945">Host-virus interaction</keyword>
<keyword id="KW-1083">Inhibition of host autophagy by virus</keyword>
<keyword id="KW-1090">Inhibition of host innate immune response by virus</keyword>
<keyword id="KW-1114">Inhibition of host interferon signaling pathway by virus</keyword>
<keyword id="KW-1102">Inhibition of host PKR by virus</keyword>
<keyword id="KW-0922">Interferon antiviral system evasion</keyword>
<keyword id="KW-1185">Reference proteome</keyword>
<keyword id="KW-0899">Viral immunoevasion</keyword>
<keyword id="KW-0946">Virion</keyword>
<gene>
    <name type="primary">TRS1</name>
</gene>
<sequence length="788" mass="83982">MAQRNGMSPRPPPLGRGRGAGGPSGVGSSPPSSCVPMGAPSTAGTGASAAATTTPGHGVHRVEPRGPPGAPPSSGNNSNFWHGPERLLLSQIPVERQALTELEYQAMGAVWRAAFLANSTGRAMRKWSQRDAGTLLPLGRPYGFYARVTPRSQMNGVGATDLRQLSPRDAWIVLVATVVHEVDPAADPTLGDKAGHPEGLCAQDGLYLALGAGFRVFVYDLANNTLILAARDADEWFRHGAGEVVRLYRCNRLGVGTPRATLLPQPALRQTLLRAEEATALGRELRRRWAGTTVALQTPGRRLQPMVLLGAWQELAQYEPFASAPHPASLLTAVRRHLNQRLCCGWLALGAVLPARWLGCAAGPATGTAAGTTSPPAASGTETEAAGGDAPCAIAGAVGSAVPVPPQPYGAAGGGAICVPNADAHAVVGADAAAAAAPTVMVGSTAMAGPAASGTVPRAMLVVLLDELGAVFGYCPLDGHVYPLAAELSHFLRAGVLGALALGRESAPAAEAARRLLPELDREQWERPRWDALHLHPRAALWAREPHGQLAFLLRPGRGEAEVLTLATKHPAICANVEDYLQDARRRADAQALGLDLATVVMEAGGQMIHKKTKKPKGKEDESLMKGKHSRYTRPTEPPLTPQASLGRALRRDDEDWKPSRLPGEDSWYDLDETFWVLGSNRKNDVYQRRWKKTVLRCGLEIDRPMPTVPKGCRPQTFTHEGIQLMGGATQEPLDTGLYAPSHVTSAFVPSVYMPPTVPYPDPAARLCRDMRRVTFSNIATHYHYNAQ</sequence>
<protein>
    <recommendedName>
        <fullName>Protein HHLF1</fullName>
    </recommendedName>
</protein>
<dbReference type="EMBL" id="X17403">
    <property type="protein sequence ID" value="CAA35269.1"/>
    <property type="molecule type" value="Genomic_DNA"/>
</dbReference>
<dbReference type="EMBL" id="X04650">
    <property type="protein sequence ID" value="CAB37121.1"/>
    <property type="molecule type" value="Genomic_DNA"/>
</dbReference>
<dbReference type="EMBL" id="BK000394">
    <property type="protein sequence ID" value="DAA00094.1"/>
    <property type="molecule type" value="Genomic_DNA"/>
</dbReference>
<dbReference type="PIR" id="C27349">
    <property type="entry name" value="QQBEE3"/>
</dbReference>
<dbReference type="Proteomes" id="UP000008991">
    <property type="component" value="Segment"/>
</dbReference>
<dbReference type="Proteomes" id="UP000008992">
    <property type="component" value="Segment"/>
</dbReference>
<dbReference type="GO" id="GO:0030430">
    <property type="term" value="C:host cell cytoplasm"/>
    <property type="evidence" value="ECO:0007669"/>
    <property type="project" value="UniProtKB-SubCell"/>
</dbReference>
<dbReference type="GO" id="GO:0042025">
    <property type="term" value="C:host cell nucleus"/>
    <property type="evidence" value="ECO:0007669"/>
    <property type="project" value="UniProtKB-SubCell"/>
</dbReference>
<dbReference type="GO" id="GO:0044423">
    <property type="term" value="C:virion component"/>
    <property type="evidence" value="ECO:0007669"/>
    <property type="project" value="UniProtKB-KW"/>
</dbReference>
<dbReference type="GO" id="GO:0030291">
    <property type="term" value="F:protein serine/threonine kinase inhibitor activity"/>
    <property type="evidence" value="ECO:0007669"/>
    <property type="project" value="UniProtKB-KW"/>
</dbReference>
<dbReference type="GO" id="GO:0140321">
    <property type="term" value="P:symbiont-mediated suppression of host autophagy"/>
    <property type="evidence" value="ECO:0007669"/>
    <property type="project" value="UniProtKB-KW"/>
</dbReference>
<dbReference type="GO" id="GO:0052170">
    <property type="term" value="P:symbiont-mediated suppression of host innate immune response"/>
    <property type="evidence" value="ECO:0007669"/>
    <property type="project" value="UniProtKB-KW"/>
</dbReference>
<dbReference type="GO" id="GO:0039580">
    <property type="term" value="P:symbiont-mediated suppression of host PKR/eIFalpha signaling"/>
    <property type="evidence" value="ECO:0007669"/>
    <property type="project" value="UniProtKB-KW"/>
</dbReference>
<dbReference type="GO" id="GO:0039502">
    <property type="term" value="P:symbiont-mediated suppression of host type I interferon-mediated signaling pathway"/>
    <property type="evidence" value="ECO:0007669"/>
    <property type="project" value="UniProtKB-KW"/>
</dbReference>
<dbReference type="InterPro" id="IPR003360">
    <property type="entry name" value="US22-like"/>
</dbReference>
<dbReference type="Pfam" id="PF02393">
    <property type="entry name" value="US22"/>
    <property type="match status" value="2"/>
</dbReference>
<organism>
    <name type="scientific">Human cytomegalovirus (strain AD169)</name>
    <name type="common">HHV-5</name>
    <name type="synonym">Human herpesvirus 5</name>
    <dbReference type="NCBI Taxonomy" id="10360"/>
    <lineage>
        <taxon>Viruses</taxon>
        <taxon>Duplodnaviria</taxon>
        <taxon>Heunggongvirae</taxon>
        <taxon>Peploviricota</taxon>
        <taxon>Herviviricetes</taxon>
        <taxon>Herpesvirales</taxon>
        <taxon>Orthoherpesviridae</taxon>
        <taxon>Betaherpesvirinae</taxon>
        <taxon>Cytomegalovirus</taxon>
        <taxon>Cytomegalovirus humanbeta5</taxon>
        <taxon>Human cytomegalovirus</taxon>
    </lineage>
</organism>